<organism>
    <name type="scientific">Variola virus</name>
    <dbReference type="NCBI Taxonomy" id="10255"/>
    <lineage>
        <taxon>Viruses</taxon>
        <taxon>Varidnaviria</taxon>
        <taxon>Bamfordvirae</taxon>
        <taxon>Nucleocytoviricota</taxon>
        <taxon>Pokkesviricetes</taxon>
        <taxon>Chitovirales</taxon>
        <taxon>Poxviridae</taxon>
        <taxon>Chordopoxvirinae</taxon>
        <taxon>Orthopoxvirus</taxon>
    </lineage>
</organism>
<gene>
    <name type="primary">OPG199</name>
    <name type="synonym">SPI-2</name>
    <name type="ORF">B12R</name>
    <name type="ORF">B13R</name>
    <name type="ORF">B14R</name>
</gene>
<proteinExistence type="inferred from homology"/>
<comment type="function">
    <text evidence="2 3">Viral serpin that inhibits both cysteine and serine proteinases involved in the regulation of host inflammatory and apoptosis processes. Major anti-apoptotic protein which inhibits both intrinsic and extrinsic pathways and strongly cleaves host CASP1 and CASP8 but is a rather poor inhibitor of host CASP3. Prevents the proteolytic activity of host interleukin-1-beta converting enzyme (ICE) and ICE-like enzymes. Can also block apoptosis through host tumor necrosis factor (TNF) receptor (By similarity). The inhibition of host ICE is an example of a 'cross-class' interaction, in which a serpin inhibits a non-serine proteinase. Also inhibits granzyme B (By similarity).</text>
</comment>
<comment type="subcellular location">
    <subcellularLocation>
        <location evidence="3">Host cytoplasm</location>
    </subcellularLocation>
</comment>
<comment type="similarity">
    <text evidence="4">Belongs to the serpin family. Poxviruses subfamily.</text>
</comment>
<reference key="1">
    <citation type="journal article" date="1993" name="Nature">
        <title>Potential virulence determinants in terminal regions of variola smallpox virus genome.</title>
        <authorList>
            <person name="Massung R.F."/>
            <person name="Esposito J.J."/>
            <person name="Liu L.I."/>
            <person name="Qi J."/>
            <person name="Utterback T.R."/>
            <person name="Knight J.C."/>
            <person name="Aubin L."/>
            <person name="Yuran T.E."/>
            <person name="Parsons J.M."/>
            <person name="Loparev V.N."/>
            <person name="Selivanov N.A."/>
            <person name="Cavallaro K.F."/>
            <person name="Kerlavage A.R."/>
            <person name="Mahy B.W.J."/>
            <person name="Venter J.C."/>
        </authorList>
    </citation>
    <scope>NUCLEOTIDE SEQUENCE [GENOMIC DNA]</scope>
    <source>
        <strain>Bangladesh-1975</strain>
    </source>
</reference>
<reference key="2">
    <citation type="submission" date="1994-12" db="EMBL/GenBank/DDBJ databases">
        <authorList>
            <person name="Massung R.F."/>
            <person name="Loparev V.N."/>
            <person name="Knight J.C."/>
            <person name="Chizhikov V.E."/>
            <person name="Parsons J.M."/>
            <person name="Totmenin A.V."/>
            <person name="Shchelkunov S.N."/>
            <person name="Esposito J.J."/>
        </authorList>
    </citation>
    <scope>NUCLEOTIDE SEQUENCE [GENOMIC DNA]</scope>
    <source>
        <strain>Somalia-1977</strain>
    </source>
</reference>
<organismHost>
    <name type="scientific">Homo sapiens</name>
    <name type="common">Human</name>
    <dbReference type="NCBI Taxonomy" id="9606"/>
</organismHost>
<name>SPI2_VARV</name>
<accession>P0DSW4</accession>
<accession>P33830</accession>
<feature type="chain" id="PRO_0000448126" description="Serine proteinase inhibitor 2">
    <location>
        <begin position="1"/>
        <end position="344"/>
    </location>
</feature>
<feature type="site" description="Reactive bond" evidence="1">
    <location>
        <begin position="306"/>
        <end position="307"/>
    </location>
</feature>
<sequence length="344" mass="38435">MDIFREIASSTKGENVFISPATISSVLTILYYGANGSTAEQLSKYVEKEETMDKVSAQNISFKSMNKVYGRYSAVFKNSFLGKIGDNFQTVDFTDCRTIDAINKCVDVFTEGKINPLLTEQLSPNTCLLAISAVYFKAKWLIPFKKEFTSDYPFYVSPTEMVDVSMMSMYGESFNYASVKESFGNFSIIELPYVGNTSMMVILPDKIDGLESIKQNLTDTNFKKWCNSLEATFIDVHIPKFKVTGSYNLVDTLVKLGLTDVFYSTGDYSNMCNSDVSVDAMIHKTYIDVNEEYTEAAAATSVLVADCASTVTNEFCADHPFIYVIRHVDGKILFVGRYCSPTTN</sequence>
<protein>
    <recommendedName>
        <fullName>Serine proteinase inhibitor 2</fullName>
        <shortName>Serp-2</shortName>
        <shortName>Serpin-2</shortName>
    </recommendedName>
</protein>
<dbReference type="EMBL" id="L22579">
    <property type="protein sequence ID" value="AAA60921.1"/>
    <property type="molecule type" value="Genomic_DNA"/>
</dbReference>
<dbReference type="EMBL" id="U18341">
    <property type="protein sequence ID" value="AAA69453.1"/>
    <property type="molecule type" value="Genomic_DNA"/>
</dbReference>
<dbReference type="PIR" id="T28611">
    <property type="entry name" value="T28611"/>
</dbReference>
<dbReference type="RefSeq" id="NP_042225.1">
    <property type="nucleotide sequence ID" value="NC_001611.1"/>
</dbReference>
<dbReference type="SMR" id="P0DSW4"/>
<dbReference type="GeneID" id="1486543"/>
<dbReference type="KEGG" id="vg:1486543"/>
<dbReference type="Proteomes" id="UP000119805">
    <property type="component" value="Segment"/>
</dbReference>
<dbReference type="GO" id="GO:0005615">
    <property type="term" value="C:extracellular space"/>
    <property type="evidence" value="ECO:0007669"/>
    <property type="project" value="InterPro"/>
</dbReference>
<dbReference type="GO" id="GO:0030430">
    <property type="term" value="C:host cell cytoplasm"/>
    <property type="evidence" value="ECO:0007669"/>
    <property type="project" value="UniProtKB-SubCell"/>
</dbReference>
<dbReference type="GO" id="GO:0004867">
    <property type="term" value="F:serine-type endopeptidase inhibitor activity"/>
    <property type="evidence" value="ECO:0007669"/>
    <property type="project" value="UniProtKB-KW"/>
</dbReference>
<dbReference type="GO" id="GO:0033668">
    <property type="term" value="P:symbiont-mediated suppression of host apoptosis"/>
    <property type="evidence" value="ECO:0007669"/>
    <property type="project" value="UniProtKB-KW"/>
</dbReference>
<dbReference type="CDD" id="cd19583">
    <property type="entry name" value="serpinN_SPI-1_SPI-2"/>
    <property type="match status" value="1"/>
</dbReference>
<dbReference type="FunFam" id="1.10.287.580:FF:000001">
    <property type="entry name" value="Serine proteinase inhibitor 2"/>
    <property type="match status" value="1"/>
</dbReference>
<dbReference type="Gene3D" id="2.30.39.10">
    <property type="entry name" value="Alpha-1-antitrypsin, domain 1"/>
    <property type="match status" value="1"/>
</dbReference>
<dbReference type="Gene3D" id="3.30.497.10">
    <property type="entry name" value="Antithrombin, subunit I, domain 2"/>
    <property type="match status" value="1"/>
</dbReference>
<dbReference type="Gene3D" id="1.10.287.580">
    <property type="entry name" value="Helix hairpin bin"/>
    <property type="match status" value="1"/>
</dbReference>
<dbReference type="InterPro" id="IPR023795">
    <property type="entry name" value="Serpin_CS"/>
</dbReference>
<dbReference type="InterPro" id="IPR023796">
    <property type="entry name" value="Serpin_dom"/>
</dbReference>
<dbReference type="InterPro" id="IPR000215">
    <property type="entry name" value="Serpin_fam"/>
</dbReference>
<dbReference type="InterPro" id="IPR036186">
    <property type="entry name" value="Serpin_sf"/>
</dbReference>
<dbReference type="InterPro" id="IPR042178">
    <property type="entry name" value="Serpin_sf_1"/>
</dbReference>
<dbReference type="InterPro" id="IPR042185">
    <property type="entry name" value="Serpin_sf_2"/>
</dbReference>
<dbReference type="PANTHER" id="PTHR11461:SF211">
    <property type="entry name" value="GH10112P-RELATED"/>
    <property type="match status" value="1"/>
</dbReference>
<dbReference type="PANTHER" id="PTHR11461">
    <property type="entry name" value="SERINE PROTEASE INHIBITOR, SERPIN"/>
    <property type="match status" value="1"/>
</dbReference>
<dbReference type="Pfam" id="PF00079">
    <property type="entry name" value="Serpin"/>
    <property type="match status" value="1"/>
</dbReference>
<dbReference type="SMART" id="SM00093">
    <property type="entry name" value="SERPIN"/>
    <property type="match status" value="1"/>
</dbReference>
<dbReference type="SUPFAM" id="SSF56574">
    <property type="entry name" value="Serpins"/>
    <property type="match status" value="1"/>
</dbReference>
<dbReference type="PROSITE" id="PS00284">
    <property type="entry name" value="SERPIN"/>
    <property type="match status" value="1"/>
</dbReference>
<evidence type="ECO:0000250" key="1"/>
<evidence type="ECO:0000250" key="2">
    <source>
        <dbReference type="UniProtKB" id="P07385"/>
    </source>
</evidence>
<evidence type="ECO:0000250" key="3">
    <source>
        <dbReference type="UniProtKB" id="P15059"/>
    </source>
</evidence>
<evidence type="ECO:0000305" key="4"/>
<keyword id="KW-1035">Host cytoplasm</keyword>
<keyword id="KW-0945">Host-virus interaction</keyword>
<keyword id="KW-1085">Inhibition of host caspases by virus</keyword>
<keyword id="KW-1119">Modulation of host cell apoptosis by virus</keyword>
<keyword id="KW-0646">Protease inhibitor</keyword>
<keyword id="KW-0722">Serine protease inhibitor</keyword>